<protein>
    <recommendedName>
        <fullName>Protein doublesex</fullName>
    </recommendedName>
</protein>
<reference key="1">
    <citation type="journal article" date="1989" name="Cell">
        <title>Drosophila doublesex gene controls somatic sexual differentiation by producing alternatively spliced mRNAs encoding related sex-specific polypeptides.</title>
        <authorList>
            <person name="Burtis K.C."/>
            <person name="Baker B.S."/>
        </authorList>
    </citation>
    <scope>NUCLEOTIDE SEQUENCE [MRNA] (ISOFORMS FEMALE AND MALE)</scope>
    <source>
        <tissue>Larva</tissue>
        <tissue>Pupae</tissue>
    </source>
</reference>
<reference key="2">
    <citation type="journal article" date="2000" name="Science">
        <title>The genome sequence of Drosophila melanogaster.</title>
        <authorList>
            <person name="Adams M.D."/>
            <person name="Celniker S.E."/>
            <person name="Holt R.A."/>
            <person name="Evans C.A."/>
            <person name="Gocayne J.D."/>
            <person name="Amanatides P.G."/>
            <person name="Scherer S.E."/>
            <person name="Li P.W."/>
            <person name="Hoskins R.A."/>
            <person name="Galle R.F."/>
            <person name="George R.A."/>
            <person name="Lewis S.E."/>
            <person name="Richards S."/>
            <person name="Ashburner M."/>
            <person name="Henderson S.N."/>
            <person name="Sutton G.G."/>
            <person name="Wortman J.R."/>
            <person name="Yandell M.D."/>
            <person name="Zhang Q."/>
            <person name="Chen L.X."/>
            <person name="Brandon R.C."/>
            <person name="Rogers Y.-H.C."/>
            <person name="Blazej R.G."/>
            <person name="Champe M."/>
            <person name="Pfeiffer B.D."/>
            <person name="Wan K.H."/>
            <person name="Doyle C."/>
            <person name="Baxter E.G."/>
            <person name="Helt G."/>
            <person name="Nelson C.R."/>
            <person name="Miklos G.L.G."/>
            <person name="Abril J.F."/>
            <person name="Agbayani A."/>
            <person name="An H.-J."/>
            <person name="Andrews-Pfannkoch C."/>
            <person name="Baldwin D."/>
            <person name="Ballew R.M."/>
            <person name="Basu A."/>
            <person name="Baxendale J."/>
            <person name="Bayraktaroglu L."/>
            <person name="Beasley E.M."/>
            <person name="Beeson K.Y."/>
            <person name="Benos P.V."/>
            <person name="Berman B.P."/>
            <person name="Bhandari D."/>
            <person name="Bolshakov S."/>
            <person name="Borkova D."/>
            <person name="Botchan M.R."/>
            <person name="Bouck J."/>
            <person name="Brokstein P."/>
            <person name="Brottier P."/>
            <person name="Burtis K.C."/>
            <person name="Busam D.A."/>
            <person name="Butler H."/>
            <person name="Cadieu E."/>
            <person name="Center A."/>
            <person name="Chandra I."/>
            <person name="Cherry J.M."/>
            <person name="Cawley S."/>
            <person name="Dahlke C."/>
            <person name="Davenport L.B."/>
            <person name="Davies P."/>
            <person name="de Pablos B."/>
            <person name="Delcher A."/>
            <person name="Deng Z."/>
            <person name="Mays A.D."/>
            <person name="Dew I."/>
            <person name="Dietz S.M."/>
            <person name="Dodson K."/>
            <person name="Doup L.E."/>
            <person name="Downes M."/>
            <person name="Dugan-Rocha S."/>
            <person name="Dunkov B.C."/>
            <person name="Dunn P."/>
            <person name="Durbin K.J."/>
            <person name="Evangelista C.C."/>
            <person name="Ferraz C."/>
            <person name="Ferriera S."/>
            <person name="Fleischmann W."/>
            <person name="Fosler C."/>
            <person name="Gabrielian A.E."/>
            <person name="Garg N.S."/>
            <person name="Gelbart W.M."/>
            <person name="Glasser K."/>
            <person name="Glodek A."/>
            <person name="Gong F."/>
            <person name="Gorrell J.H."/>
            <person name="Gu Z."/>
            <person name="Guan P."/>
            <person name="Harris M."/>
            <person name="Harris N.L."/>
            <person name="Harvey D.A."/>
            <person name="Heiman T.J."/>
            <person name="Hernandez J.R."/>
            <person name="Houck J."/>
            <person name="Hostin D."/>
            <person name="Houston K.A."/>
            <person name="Howland T.J."/>
            <person name="Wei M.-H."/>
            <person name="Ibegwam C."/>
            <person name="Jalali M."/>
            <person name="Kalush F."/>
            <person name="Karpen G.H."/>
            <person name="Ke Z."/>
            <person name="Kennison J.A."/>
            <person name="Ketchum K.A."/>
            <person name="Kimmel B.E."/>
            <person name="Kodira C.D."/>
            <person name="Kraft C.L."/>
            <person name="Kravitz S."/>
            <person name="Kulp D."/>
            <person name="Lai Z."/>
            <person name="Lasko P."/>
            <person name="Lei Y."/>
            <person name="Levitsky A.A."/>
            <person name="Li J.H."/>
            <person name="Li Z."/>
            <person name="Liang Y."/>
            <person name="Lin X."/>
            <person name="Liu X."/>
            <person name="Mattei B."/>
            <person name="McIntosh T.C."/>
            <person name="McLeod M.P."/>
            <person name="McPherson D."/>
            <person name="Merkulov G."/>
            <person name="Milshina N.V."/>
            <person name="Mobarry C."/>
            <person name="Morris J."/>
            <person name="Moshrefi A."/>
            <person name="Mount S.M."/>
            <person name="Moy M."/>
            <person name="Murphy B."/>
            <person name="Murphy L."/>
            <person name="Muzny D.M."/>
            <person name="Nelson D.L."/>
            <person name="Nelson D.R."/>
            <person name="Nelson K.A."/>
            <person name="Nixon K."/>
            <person name="Nusskern D.R."/>
            <person name="Pacleb J.M."/>
            <person name="Palazzolo M."/>
            <person name="Pittman G.S."/>
            <person name="Pan S."/>
            <person name="Pollard J."/>
            <person name="Puri V."/>
            <person name="Reese M.G."/>
            <person name="Reinert K."/>
            <person name="Remington K."/>
            <person name="Saunders R.D.C."/>
            <person name="Scheeler F."/>
            <person name="Shen H."/>
            <person name="Shue B.C."/>
            <person name="Siden-Kiamos I."/>
            <person name="Simpson M."/>
            <person name="Skupski M.P."/>
            <person name="Smith T.J."/>
            <person name="Spier E."/>
            <person name="Spradling A.C."/>
            <person name="Stapleton M."/>
            <person name="Strong R."/>
            <person name="Sun E."/>
            <person name="Svirskas R."/>
            <person name="Tector C."/>
            <person name="Turner R."/>
            <person name="Venter E."/>
            <person name="Wang A.H."/>
            <person name="Wang X."/>
            <person name="Wang Z.-Y."/>
            <person name="Wassarman D.A."/>
            <person name="Weinstock G.M."/>
            <person name="Weissenbach J."/>
            <person name="Williams S.M."/>
            <person name="Woodage T."/>
            <person name="Worley K.C."/>
            <person name="Wu D."/>
            <person name="Yang S."/>
            <person name="Yao Q.A."/>
            <person name="Ye J."/>
            <person name="Yeh R.-F."/>
            <person name="Zaveri J.S."/>
            <person name="Zhan M."/>
            <person name="Zhang G."/>
            <person name="Zhao Q."/>
            <person name="Zheng L."/>
            <person name="Zheng X.H."/>
            <person name="Zhong F.N."/>
            <person name="Zhong W."/>
            <person name="Zhou X."/>
            <person name="Zhu S.C."/>
            <person name="Zhu X."/>
            <person name="Smith H.O."/>
            <person name="Gibbs R.A."/>
            <person name="Myers E.W."/>
            <person name="Rubin G.M."/>
            <person name="Venter J.C."/>
        </authorList>
    </citation>
    <scope>NUCLEOTIDE SEQUENCE [LARGE SCALE GENOMIC DNA]</scope>
    <source>
        <strain>Berkeley</strain>
    </source>
</reference>
<reference key="3">
    <citation type="journal article" date="2002" name="Genome Biol.">
        <title>Annotation of the Drosophila melanogaster euchromatic genome: a systematic review.</title>
        <authorList>
            <person name="Misra S."/>
            <person name="Crosby M.A."/>
            <person name="Mungall C.J."/>
            <person name="Matthews B.B."/>
            <person name="Campbell K.S."/>
            <person name="Hradecky P."/>
            <person name="Huang Y."/>
            <person name="Kaminker J.S."/>
            <person name="Millburn G.H."/>
            <person name="Prochnik S.E."/>
            <person name="Smith C.D."/>
            <person name="Tupy J.L."/>
            <person name="Whitfield E.J."/>
            <person name="Bayraktaroglu L."/>
            <person name="Berman B.P."/>
            <person name="Bettencourt B.R."/>
            <person name="Celniker S.E."/>
            <person name="de Grey A.D.N.J."/>
            <person name="Drysdale R.A."/>
            <person name="Harris N.L."/>
            <person name="Richter J."/>
            <person name="Russo S."/>
            <person name="Schroeder A.J."/>
            <person name="Shu S.Q."/>
            <person name="Stapleton M."/>
            <person name="Yamada C."/>
            <person name="Ashburner M."/>
            <person name="Gelbart W.M."/>
            <person name="Rubin G.M."/>
            <person name="Lewis S.E."/>
        </authorList>
    </citation>
    <scope>GENOME REANNOTATION</scope>
    <scope>ALTERNATIVE SPLICING</scope>
    <source>
        <strain>Berkeley</strain>
    </source>
</reference>
<reference key="4">
    <citation type="journal article" date="2002" name="Genome Biol.">
        <title>A Drosophila full-length cDNA resource.</title>
        <authorList>
            <person name="Stapleton M."/>
            <person name="Carlson J.W."/>
            <person name="Brokstein P."/>
            <person name="Yu C."/>
            <person name="Champe M."/>
            <person name="George R.A."/>
            <person name="Guarin H."/>
            <person name="Kronmiller B."/>
            <person name="Pacleb J.M."/>
            <person name="Park S."/>
            <person name="Wan K.H."/>
            <person name="Rubin G.M."/>
            <person name="Celniker S.E."/>
        </authorList>
    </citation>
    <scope>NUCLEOTIDE SEQUENCE [LARGE SCALE MRNA] (ISOFORM FEMALE)</scope>
    <source>
        <strain>Berkeley</strain>
        <tissue>Head</tissue>
    </source>
</reference>
<reference key="5">
    <citation type="journal article" date="1991" name="EMBO J.">
        <title>The doublesex proteins of Drosophila melanogaster bind directly to a sex-specific yolk protein gene enhancer.</title>
        <authorList>
            <person name="Burtis K.C."/>
            <person name="Coschigano K.T."/>
            <person name="Baker B.S."/>
            <person name="Wensink P.C."/>
        </authorList>
    </citation>
    <scope>DNA-BINDING</scope>
</reference>
<reference key="6">
    <citation type="journal article" date="1993" name="EMBO J.">
        <title>The Drosophila doublesex proteins share a novel zinc finger related DNA binding domain.</title>
        <authorList>
            <person name="Erdman S.E."/>
            <person name="Burtis K.C."/>
        </authorList>
    </citation>
    <scope>DNA-BINDING DOMAIN</scope>
    <scope>MUTAGENESIS</scope>
</reference>
<reference key="7">
    <citation type="journal article" date="2002" name="Genes Dev.">
        <title>The Drosophila takeout gene is regulated by the somatic sex-determination pathway and affects male courtship behavior.</title>
        <authorList>
            <person name="Dauwalder B."/>
            <person name="Tsujimoto S."/>
            <person name="Moss J."/>
            <person name="Mattox W."/>
        </authorList>
    </citation>
    <scope>FUNCTION</scope>
    <source>
        <strain>Canton-S</strain>
    </source>
</reference>
<dbReference type="EMBL" id="M25292">
    <property type="protein sequence ID" value="AAA17840.1"/>
    <property type="molecule type" value="mRNA"/>
</dbReference>
<dbReference type="EMBL" id="M25293">
    <property type="protein sequence ID" value="AAA17841.1"/>
    <property type="molecule type" value="mRNA"/>
</dbReference>
<dbReference type="EMBL" id="M25294">
    <property type="protein sequence ID" value="AAA17842.1"/>
    <property type="molecule type" value="mRNA"/>
</dbReference>
<dbReference type="EMBL" id="AE014297">
    <property type="protein sequence ID" value="AAF54169.1"/>
    <property type="molecule type" value="Genomic_DNA"/>
</dbReference>
<dbReference type="EMBL" id="AE014297">
    <property type="protein sequence ID" value="AAN13385.1"/>
    <property type="molecule type" value="Genomic_DNA"/>
</dbReference>
<dbReference type="EMBL" id="AY060257">
    <property type="protein sequence ID" value="AAL25296.1"/>
    <property type="molecule type" value="mRNA"/>
</dbReference>
<dbReference type="EMBL" id="BT029258">
    <property type="protein sequence ID" value="ABK30895.1"/>
    <property type="molecule type" value="mRNA"/>
</dbReference>
<dbReference type="PIR" id="A32372">
    <property type="entry name" value="A32372"/>
</dbReference>
<dbReference type="PIR" id="B32372">
    <property type="entry name" value="B32372"/>
</dbReference>
<dbReference type="RefSeq" id="NP_001262352.1">
    <molecule id="P23023-1"/>
    <property type="nucleotide sequence ID" value="NM_001275423.1"/>
</dbReference>
<dbReference type="RefSeq" id="NP_001287220.1">
    <molecule id="P23023-2"/>
    <property type="nucleotide sequence ID" value="NM_001300291.1"/>
</dbReference>
<dbReference type="RefSeq" id="NP_524272.4">
    <molecule id="P23023-2"/>
    <property type="nucleotide sequence ID" value="NM_079548.5"/>
</dbReference>
<dbReference type="RefSeq" id="NP_731197.1">
    <molecule id="P23023-1"/>
    <property type="nucleotide sequence ID" value="NM_169202.1"/>
</dbReference>
<dbReference type="RefSeq" id="NP_731198.1">
    <molecule id="P23023-2"/>
    <property type="nucleotide sequence ID" value="NM_169203.2"/>
</dbReference>
<dbReference type="PDB" id="1LPV">
    <property type="method" value="NMR"/>
    <property type="chains" value="A=35-86"/>
</dbReference>
<dbReference type="PDB" id="1ZV1">
    <property type="method" value="X-ray"/>
    <property type="resolution" value="1.60 A"/>
    <property type="chains" value="A/B=350-397"/>
</dbReference>
<dbReference type="PDB" id="2JZ0">
    <property type="method" value="NMR"/>
    <property type="chains" value="A/B=350-397"/>
</dbReference>
<dbReference type="PDB" id="2JZ1">
    <property type="method" value="NMR"/>
    <property type="chains" value="A/B=350-397"/>
</dbReference>
<dbReference type="PDBsum" id="1LPV"/>
<dbReference type="PDBsum" id="1ZV1"/>
<dbReference type="PDBsum" id="2JZ0"/>
<dbReference type="PDBsum" id="2JZ1"/>
<dbReference type="SMR" id="P23023"/>
<dbReference type="BioGRID" id="66125">
    <property type="interactions" value="81"/>
</dbReference>
<dbReference type="DIP" id="DIP-17110N"/>
<dbReference type="FunCoup" id="P23023">
    <property type="interactions" value="217"/>
</dbReference>
<dbReference type="IntAct" id="P23023">
    <property type="interactions" value="35"/>
</dbReference>
<dbReference type="STRING" id="7227.FBpp0303107"/>
<dbReference type="GlyGen" id="P23023">
    <property type="glycosylation" value="1 site"/>
</dbReference>
<dbReference type="PaxDb" id="7227-FBpp0081256"/>
<dbReference type="DNASU" id="40940"/>
<dbReference type="EnsemblMetazoa" id="FBtr0081759">
    <molecule id="P23023-1"/>
    <property type="protein sequence ID" value="FBpp0081256"/>
    <property type="gene ID" value="FBgn0000504"/>
</dbReference>
<dbReference type="EnsemblMetazoa" id="FBtr0081760">
    <molecule id="P23023-2"/>
    <property type="protein sequence ID" value="FBpp0081257"/>
    <property type="gene ID" value="FBgn0000504"/>
</dbReference>
<dbReference type="EnsemblMetazoa" id="FBtr0081761">
    <molecule id="P23023-2"/>
    <property type="protein sequence ID" value="FBpp0081258"/>
    <property type="gene ID" value="FBgn0000504"/>
</dbReference>
<dbReference type="EnsemblMetazoa" id="FBtr0330073">
    <molecule id="P23023-1"/>
    <property type="protein sequence ID" value="FBpp0303106"/>
    <property type="gene ID" value="FBgn0000504"/>
</dbReference>
<dbReference type="EnsemblMetazoa" id="FBtr0339710">
    <molecule id="P23023-2"/>
    <property type="protein sequence ID" value="FBpp0308767"/>
    <property type="gene ID" value="FBgn0000504"/>
</dbReference>
<dbReference type="GeneID" id="40940"/>
<dbReference type="KEGG" id="dme:Dmel_CG11094"/>
<dbReference type="UCSC" id="CG11094-RA">
    <molecule id="P23023-1"/>
    <property type="organism name" value="d. melanogaster"/>
</dbReference>
<dbReference type="AGR" id="FB:FBgn0000504"/>
<dbReference type="CTD" id="40940"/>
<dbReference type="FlyBase" id="FBgn0000504">
    <property type="gene designation" value="dsx"/>
</dbReference>
<dbReference type="VEuPathDB" id="VectorBase:FBgn0000504"/>
<dbReference type="eggNOG" id="KOG3815">
    <property type="taxonomic scope" value="Eukaryota"/>
</dbReference>
<dbReference type="InParanoid" id="P23023"/>
<dbReference type="OMA" id="TSGAPMY"/>
<dbReference type="OrthoDB" id="5842031at2759"/>
<dbReference type="PhylomeDB" id="P23023"/>
<dbReference type="SignaLink" id="P23023"/>
<dbReference type="BioGRID-ORCS" id="40940">
    <property type="hits" value="0 hits in 3 CRISPR screens"/>
</dbReference>
<dbReference type="EvolutionaryTrace" id="P23023"/>
<dbReference type="GenomeRNAi" id="40940"/>
<dbReference type="PRO" id="PR:P23023"/>
<dbReference type="Proteomes" id="UP000000803">
    <property type="component" value="Chromosome 3R"/>
</dbReference>
<dbReference type="Bgee" id="FBgn0000504">
    <property type="expression patterns" value="Expressed in cyst progenitor cell (Drosophila) in testis and 173 other cell types or tissues"/>
</dbReference>
<dbReference type="ExpressionAtlas" id="P23023">
    <property type="expression patterns" value="baseline and differential"/>
</dbReference>
<dbReference type="GO" id="GO:0005634">
    <property type="term" value="C:nucleus"/>
    <property type="evidence" value="ECO:0000318"/>
    <property type="project" value="GO_Central"/>
</dbReference>
<dbReference type="GO" id="GO:0001228">
    <property type="term" value="F:DNA-binding transcription activator activity, RNA polymerase II-specific"/>
    <property type="evidence" value="ECO:0000314"/>
    <property type="project" value="FlyBase"/>
</dbReference>
<dbReference type="GO" id="GO:0000981">
    <property type="term" value="F:DNA-binding transcription factor activity, RNA polymerase II-specific"/>
    <property type="evidence" value="ECO:0000318"/>
    <property type="project" value="GO_Central"/>
</dbReference>
<dbReference type="GO" id="GO:0001227">
    <property type="term" value="F:DNA-binding transcription repressor activity, RNA polymerase II-specific"/>
    <property type="evidence" value="ECO:0000314"/>
    <property type="project" value="FlyBase"/>
</dbReference>
<dbReference type="GO" id="GO:0042803">
    <property type="term" value="F:protein homodimerization activity"/>
    <property type="evidence" value="ECO:0000314"/>
    <property type="project" value="FlyBase"/>
</dbReference>
<dbReference type="GO" id="GO:0000978">
    <property type="term" value="F:RNA polymerase II cis-regulatory region sequence-specific DNA binding"/>
    <property type="evidence" value="ECO:0000318"/>
    <property type="project" value="GO_Central"/>
</dbReference>
<dbReference type="GO" id="GO:0000977">
    <property type="term" value="F:RNA polymerase II transcription regulatory region sequence-specific DNA binding"/>
    <property type="evidence" value="ECO:0000314"/>
    <property type="project" value="FlyBase"/>
</dbReference>
<dbReference type="GO" id="GO:0008270">
    <property type="term" value="F:zinc ion binding"/>
    <property type="evidence" value="ECO:0000314"/>
    <property type="project" value="FlyBase"/>
</dbReference>
<dbReference type="GO" id="GO:0016199">
    <property type="term" value="P:axon midline choice point recognition"/>
    <property type="evidence" value="ECO:0000315"/>
    <property type="project" value="FlyBase"/>
</dbReference>
<dbReference type="GO" id="GO:0007619">
    <property type="term" value="P:courtship behavior"/>
    <property type="evidence" value="ECO:0000303"/>
    <property type="project" value="FlyBase"/>
</dbReference>
<dbReference type="GO" id="GO:0045497">
    <property type="term" value="P:female analia development"/>
    <property type="evidence" value="ECO:0000303"/>
    <property type="project" value="FlyBase"/>
</dbReference>
<dbReference type="GO" id="GO:0046660">
    <property type="term" value="P:female sex differentiation"/>
    <property type="evidence" value="ECO:0000304"/>
    <property type="project" value="FlyBase"/>
</dbReference>
<dbReference type="GO" id="GO:0019101">
    <property type="term" value="P:female somatic sex determination"/>
    <property type="evidence" value="ECO:0000304"/>
    <property type="project" value="FlyBase"/>
</dbReference>
<dbReference type="GO" id="GO:0035215">
    <property type="term" value="P:genital disc development"/>
    <property type="evidence" value="ECO:0000315"/>
    <property type="project" value="FlyBase"/>
</dbReference>
<dbReference type="GO" id="GO:0007486">
    <property type="term" value="P:imaginal disc-derived female genitalia development"/>
    <property type="evidence" value="ECO:0000315"/>
    <property type="project" value="FlyBase"/>
</dbReference>
<dbReference type="GO" id="GO:0007485">
    <property type="term" value="P:imaginal disc-derived male genitalia development"/>
    <property type="evidence" value="ECO:0000316"/>
    <property type="project" value="FlyBase"/>
</dbReference>
<dbReference type="GO" id="GO:0045496">
    <property type="term" value="P:male analia development"/>
    <property type="evidence" value="ECO:0000303"/>
    <property type="project" value="FlyBase"/>
</dbReference>
<dbReference type="GO" id="GO:0008049">
    <property type="term" value="P:male courtship behavior"/>
    <property type="evidence" value="ECO:0000304"/>
    <property type="project" value="FlyBase"/>
</dbReference>
<dbReference type="GO" id="GO:0045433">
    <property type="term" value="P:male courtship behavior, veined wing generated song production"/>
    <property type="evidence" value="ECO:0000304"/>
    <property type="project" value="FlyBase"/>
</dbReference>
<dbReference type="GO" id="GO:0046661">
    <property type="term" value="P:male sex differentiation"/>
    <property type="evidence" value="ECO:0000304"/>
    <property type="project" value="FlyBase"/>
</dbReference>
<dbReference type="GO" id="GO:0048086">
    <property type="term" value="P:negative regulation of developmental pigmentation"/>
    <property type="evidence" value="ECO:0000304"/>
    <property type="project" value="FlyBase"/>
</dbReference>
<dbReference type="GO" id="GO:0045892">
    <property type="term" value="P:negative regulation of DNA-templated transcription"/>
    <property type="evidence" value="ECO:0000303"/>
    <property type="project" value="FlyBase"/>
</dbReference>
<dbReference type="GO" id="GO:0045893">
    <property type="term" value="P:positive regulation of DNA-templated transcription"/>
    <property type="evidence" value="ECO:0000303"/>
    <property type="project" value="FlyBase"/>
</dbReference>
<dbReference type="GO" id="GO:0045944">
    <property type="term" value="P:positive regulation of transcription by RNA polymerase II"/>
    <property type="evidence" value="ECO:0000304"/>
    <property type="project" value="FlyBase"/>
</dbReference>
<dbReference type="GO" id="GO:0006357">
    <property type="term" value="P:regulation of transcription by RNA polymerase II"/>
    <property type="evidence" value="ECO:0000314"/>
    <property type="project" value="FlyBase"/>
</dbReference>
<dbReference type="GO" id="GO:0045498">
    <property type="term" value="P:sex comb development"/>
    <property type="evidence" value="ECO:0000304"/>
    <property type="project" value="FlyBase"/>
</dbReference>
<dbReference type="GO" id="GO:0007530">
    <property type="term" value="P:sex determination"/>
    <property type="evidence" value="ECO:0000304"/>
    <property type="project" value="FlyBase"/>
</dbReference>
<dbReference type="GO" id="GO:0007548">
    <property type="term" value="P:sex differentiation"/>
    <property type="evidence" value="ECO:0000318"/>
    <property type="project" value="GO_Central"/>
</dbReference>
<dbReference type="GO" id="GO:0048071">
    <property type="term" value="P:sex-specific pigmentation"/>
    <property type="evidence" value="ECO:0000304"/>
    <property type="project" value="FlyBase"/>
</dbReference>
<dbReference type="GO" id="GO:0018993">
    <property type="term" value="P:somatic sex determination"/>
    <property type="evidence" value="ECO:0000304"/>
    <property type="project" value="FlyBase"/>
</dbReference>
<dbReference type="FunFam" id="4.10.1040.10:FF:000001">
    <property type="entry name" value="doublesex- and mab-3-related transcription factor 1"/>
    <property type="match status" value="1"/>
</dbReference>
<dbReference type="Gene3D" id="4.10.1040.10">
    <property type="entry name" value="DM DNA-binding domain"/>
    <property type="match status" value="1"/>
</dbReference>
<dbReference type="Gene3D" id="1.10.8.10">
    <property type="entry name" value="DNA helicase RuvA subunit, C-terminal domain"/>
    <property type="match status" value="1"/>
</dbReference>
<dbReference type="InterPro" id="IPR001275">
    <property type="entry name" value="DM_DNA-bd"/>
</dbReference>
<dbReference type="InterPro" id="IPR036407">
    <property type="entry name" value="DM_DNA-bd_sf"/>
</dbReference>
<dbReference type="InterPro" id="IPR026607">
    <property type="entry name" value="DMRT"/>
</dbReference>
<dbReference type="InterPro" id="IPR014932">
    <property type="entry name" value="DSX_dimer"/>
</dbReference>
<dbReference type="PANTHER" id="PTHR12322">
    <property type="entry name" value="DOUBLESEX AND MAB-3 RELATED TRANSCRIPTION FACTOR DMRT"/>
    <property type="match status" value="1"/>
</dbReference>
<dbReference type="PANTHER" id="PTHR12322:SF100">
    <property type="entry name" value="PROTEIN DOUBLESEX"/>
    <property type="match status" value="1"/>
</dbReference>
<dbReference type="Pfam" id="PF00751">
    <property type="entry name" value="DM"/>
    <property type="match status" value="1"/>
</dbReference>
<dbReference type="Pfam" id="PF08828">
    <property type="entry name" value="DSX_dimer"/>
    <property type="match status" value="1"/>
</dbReference>
<dbReference type="SMART" id="SM00301">
    <property type="entry name" value="DM"/>
    <property type="match status" value="1"/>
</dbReference>
<dbReference type="SMART" id="SM01143">
    <property type="entry name" value="DSX_dimer"/>
    <property type="match status" value="1"/>
</dbReference>
<dbReference type="SUPFAM" id="SSF82927">
    <property type="entry name" value="Cysteine-rich DNA binding domain, (DM domain)"/>
    <property type="match status" value="1"/>
</dbReference>
<dbReference type="PROSITE" id="PS40000">
    <property type="entry name" value="DM_1"/>
    <property type="match status" value="1"/>
</dbReference>
<dbReference type="PROSITE" id="PS50809">
    <property type="entry name" value="DM_2"/>
    <property type="match status" value="1"/>
</dbReference>
<organism>
    <name type="scientific">Drosophila melanogaster</name>
    <name type="common">Fruit fly</name>
    <dbReference type="NCBI Taxonomy" id="7227"/>
    <lineage>
        <taxon>Eukaryota</taxon>
        <taxon>Metazoa</taxon>
        <taxon>Ecdysozoa</taxon>
        <taxon>Arthropoda</taxon>
        <taxon>Hexapoda</taxon>
        <taxon>Insecta</taxon>
        <taxon>Pterygota</taxon>
        <taxon>Neoptera</taxon>
        <taxon>Endopterygota</taxon>
        <taxon>Diptera</taxon>
        <taxon>Brachycera</taxon>
        <taxon>Muscomorpha</taxon>
        <taxon>Ephydroidea</taxon>
        <taxon>Drosophilidae</taxon>
        <taxon>Drosophila</taxon>
        <taxon>Sophophora</taxon>
    </lineage>
</organism>
<accession>P23023</accession>
<accession>P23022</accession>
<accession>Q0KIA7</accession>
<accession>Q95TA5</accession>
<accession>Q9VHY0</accession>
<keyword id="KW-0002">3D-structure</keyword>
<keyword id="KW-0025">Alternative splicing</keyword>
<keyword id="KW-0221">Differentiation</keyword>
<keyword id="KW-0238">DNA-binding</keyword>
<keyword id="KW-0479">Metal-binding</keyword>
<keyword id="KW-0539">Nucleus</keyword>
<keyword id="KW-1185">Reference proteome</keyword>
<keyword id="KW-0726">Sexual differentiation</keyword>
<keyword id="KW-0804">Transcription</keyword>
<keyword id="KW-0805">Transcription regulation</keyword>
<keyword id="KW-0862">Zinc</keyword>
<name>DSX_DROME</name>
<evidence type="ECO:0000255" key="1">
    <source>
        <dbReference type="PROSITE-ProRule" id="PRU00070"/>
    </source>
</evidence>
<evidence type="ECO:0000256" key="2">
    <source>
        <dbReference type="SAM" id="MobiDB-lite"/>
    </source>
</evidence>
<evidence type="ECO:0000269" key="3">
    <source>
    </source>
</evidence>
<evidence type="ECO:0000269" key="4">
    <source>
    </source>
</evidence>
<evidence type="ECO:0000303" key="5">
    <source>
    </source>
</evidence>
<evidence type="ECO:0000303" key="6">
    <source>
    </source>
</evidence>
<evidence type="ECO:0000305" key="7"/>
<evidence type="ECO:0007829" key="8">
    <source>
        <dbReference type="PDB" id="1LPV"/>
    </source>
</evidence>
<evidence type="ECO:0007829" key="9">
    <source>
        <dbReference type="PDB" id="1ZV1"/>
    </source>
</evidence>
<evidence type="ECO:0007829" key="10">
    <source>
        <dbReference type="PDB" id="2JZ1"/>
    </source>
</evidence>
<sequence length="549" mass="57409">MVSEENWNSDTMSDSDMIDSKNDVCGGASSSSGSSISPRTPPNCARCRNHGLKITLKGHKRYCKFRYCTCEKCRLTADRQRVMALQTALRRAQAQDEQRALHMHEVPPANPAATTLLSHHHHVAAPAHVHAHHVHAHHAHGGHHSHHGHVLHHQQAAAAAAAAPSAPASHLGGSSTAASSIHGHAHAHHVHMAAAAAASVAQHQHQSHPHSHHHHHQNHHQHPHQQPATQTALRSPPHSDHGGSVGPATSSSGGGAPSSSNAAAATSSNGSSGGGGGGGGGSSGGGAGGGRSSGTSVITSADHHMTTVPTPAQSLEGSCDSSSPSPSSTSGAAILPISVSVNRKNGANVPLGQDVFLDYCQKLLEKFRYPWELMPLMYVILKDADANIEEASRRIEEARVEINRTVAQIYYNYYTPMALVNGAPMYLTYPSIEQGRYGAHFTHLPLTQICPPTPEPLALSRSPSSPSGPSAVHNQKPSRPGSSNGTVHSAASPTMVTTMATTSSTPTLSRRQRSRSATPTTPPPPPPAHSSSNGAYHHGHHLVSSTAAT</sequence>
<comment type="function">
    <text evidence="3">Controls somatic sexual differentiation. Binds directly and specifically to the FBE (fat body enhancer) of the yolk protein 1 and 2 genes (Yp1 and Yp2). This enhancer is sufficient to direct the female-specific transcription characteristic of the Yp genes in adult fat bodies. Involved in regulation of male-specific expression of takeout in brain-associated fat body.</text>
</comment>
<comment type="interaction">
    <interactant intactId="EBI-15110079">
        <id>P23023-2</id>
    </interactant>
    <interactant intactId="EBI-201877">
        <id>Q01645</id>
        <label>Mst84Dd</label>
    </interactant>
    <organismsDiffer>false</organismsDiffer>
    <experiments>4</experiments>
</comment>
<comment type="interaction">
    <interactant intactId="EBI-15110079">
        <id>P23023-2</id>
    </interactant>
    <interactant intactId="EBI-131659">
        <id>P08175</id>
        <label>Mst87F</label>
    </interactant>
    <organismsDiffer>false</organismsDiffer>
    <experiments>4</experiments>
</comment>
<comment type="subcellular location">
    <subcellularLocation>
        <location>Nucleus</location>
    </subcellularLocation>
</comment>
<comment type="alternative products">
    <event type="alternative splicing"/>
    <isoform>
        <id>P23023-1</id>
        <name>Male</name>
        <name>A</name>
        <sequence type="displayed"/>
    </isoform>
    <isoform>
        <id>P23023-2</id>
        <name>Female</name>
        <name>B</name>
        <name>C</name>
        <sequence type="described" ref="VSP_001321 VSP_001322"/>
    </isoform>
</comment>
<comment type="miscellaneous">
    <text>Experimentally shown to bind zinc.</text>
</comment>
<feature type="chain" id="PRO_0000207041" description="Protein doublesex">
    <location>
        <begin position="1"/>
        <end position="549"/>
    </location>
</feature>
<feature type="DNA-binding region" description="DM" evidence="1">
    <location>
        <begin position="44"/>
        <end position="91"/>
    </location>
</feature>
<feature type="region of interest" description="Disordered" evidence="2">
    <location>
        <begin position="1"/>
        <end position="42"/>
    </location>
</feature>
<feature type="region of interest" description="Disordered" evidence="2">
    <location>
        <begin position="129"/>
        <end position="331"/>
    </location>
</feature>
<feature type="region of interest" description="Disordered" evidence="2">
    <location>
        <begin position="452"/>
        <end position="549"/>
    </location>
</feature>
<feature type="compositionally biased region" description="Low complexity" evidence="2">
    <location>
        <begin position="26"/>
        <end position="37"/>
    </location>
</feature>
<feature type="compositionally biased region" description="Basic residues" evidence="2">
    <location>
        <begin position="129"/>
        <end position="152"/>
    </location>
</feature>
<feature type="compositionally biased region" description="Low complexity" evidence="2">
    <location>
        <begin position="153"/>
        <end position="182"/>
    </location>
</feature>
<feature type="compositionally biased region" description="Low complexity" evidence="2">
    <location>
        <begin position="192"/>
        <end position="204"/>
    </location>
</feature>
<feature type="compositionally biased region" description="Basic residues" evidence="2">
    <location>
        <begin position="205"/>
        <end position="223"/>
    </location>
</feature>
<feature type="compositionally biased region" description="Low complexity" evidence="2">
    <location>
        <begin position="246"/>
        <end position="270"/>
    </location>
</feature>
<feature type="compositionally biased region" description="Gly residues" evidence="2">
    <location>
        <begin position="271"/>
        <end position="292"/>
    </location>
</feature>
<feature type="compositionally biased region" description="Polar residues" evidence="2">
    <location>
        <begin position="307"/>
        <end position="320"/>
    </location>
</feature>
<feature type="compositionally biased region" description="Low complexity" evidence="2">
    <location>
        <begin position="321"/>
        <end position="330"/>
    </location>
</feature>
<feature type="compositionally biased region" description="Low complexity" evidence="2">
    <location>
        <begin position="456"/>
        <end position="471"/>
    </location>
</feature>
<feature type="compositionally biased region" description="Polar residues" evidence="2">
    <location>
        <begin position="472"/>
        <end position="487"/>
    </location>
</feature>
<feature type="compositionally biased region" description="Low complexity" evidence="2">
    <location>
        <begin position="489"/>
        <end position="507"/>
    </location>
</feature>
<feature type="splice variant" id="VSP_001321" description="In isoform Female." evidence="5 6">
    <original>ARVEINRTVAQIYYNYYTPMALVNGAPMYL</original>
    <variation>GQYVVNEYSRQHNLNIYDGGELRNTTRQCG</variation>
    <location>
        <begin position="398"/>
        <end position="427"/>
    </location>
</feature>
<feature type="splice variant" id="VSP_001322" description="In isoform Female." evidence="5 6">
    <location>
        <begin position="428"/>
        <end position="549"/>
    </location>
</feature>
<feature type="mutagenesis site" description="Abolishes DNA-binding." evidence="4">
    <original>C</original>
    <variation>A</variation>
    <variation>H</variation>
    <location>
        <position position="47"/>
    </location>
</feature>
<feature type="mutagenesis site" description="Abolishes DNA-binding." evidence="4">
    <original>H</original>
    <variation>Y</variation>
    <location>
        <position position="50"/>
    </location>
</feature>
<feature type="mutagenesis site" description="Abolishes DNA-binding." evidence="4">
    <original>H</original>
    <variation>Y</variation>
    <location>
        <position position="59"/>
    </location>
</feature>
<feature type="mutagenesis site" description="Abolishes DNA-binding." evidence="4">
    <original>C</original>
    <variation>D</variation>
    <variation>Y</variation>
    <location>
        <position position="68"/>
    </location>
</feature>
<feature type="mutagenesis site" description="Abolishes DNA-binding." evidence="4">
    <original>C</original>
    <variation>Y</variation>
    <location>
        <position position="70"/>
    </location>
</feature>
<feature type="mutagenesis site" description="Abolishes DNA-binding." evidence="4">
    <original>R</original>
    <variation>Q</variation>
    <location>
        <position position="91"/>
    </location>
</feature>
<feature type="sequence conflict" description="In Ref. 4; AAL25296." evidence="7" ref="4">
    <original>K</original>
    <variation>N</variation>
    <location>
        <position position="53"/>
    </location>
</feature>
<feature type="helix" evidence="8">
    <location>
        <begin position="45"/>
        <end position="48"/>
    </location>
</feature>
<feature type="turn" evidence="8">
    <location>
        <begin position="49"/>
        <end position="51"/>
    </location>
</feature>
<feature type="turn" evidence="8">
    <location>
        <begin position="55"/>
        <end position="58"/>
    </location>
</feature>
<feature type="helix" evidence="8">
    <location>
        <begin position="60"/>
        <end position="62"/>
    </location>
</feature>
<feature type="turn" evidence="8">
    <location>
        <begin position="64"/>
        <end position="67"/>
    </location>
</feature>
<feature type="helix" evidence="8">
    <location>
        <begin position="71"/>
        <end position="80"/>
    </location>
</feature>
<feature type="helix" evidence="9">
    <location>
        <begin position="354"/>
        <end position="366"/>
    </location>
</feature>
<feature type="helix" evidence="9">
    <location>
        <begin position="371"/>
        <end position="373"/>
    </location>
</feature>
<feature type="helix" evidence="9">
    <location>
        <begin position="374"/>
        <end position="383"/>
    </location>
</feature>
<feature type="turn" evidence="9">
    <location>
        <begin position="384"/>
        <end position="386"/>
    </location>
</feature>
<feature type="helix" evidence="9">
    <location>
        <begin position="388"/>
        <end position="407"/>
    </location>
</feature>
<feature type="strand" evidence="10">
    <location>
        <begin position="411"/>
        <end position="413"/>
    </location>
</feature>
<gene>
    <name type="primary">dsx</name>
    <name type="ORF">CG11094</name>
</gene>
<proteinExistence type="evidence at protein level"/>